<gene>
    <name evidence="1" type="primary">smpB</name>
    <name type="ordered locus">CV_3464</name>
</gene>
<proteinExistence type="inferred from homology"/>
<feature type="chain" id="PRO_0000102933" description="SsrA-binding protein">
    <location>
        <begin position="1"/>
        <end position="151"/>
    </location>
</feature>
<feature type="region of interest" description="Disordered" evidence="2">
    <location>
        <begin position="121"/>
        <end position="151"/>
    </location>
</feature>
<feature type="compositionally biased region" description="Basic and acidic residues" evidence="2">
    <location>
        <begin position="126"/>
        <end position="142"/>
    </location>
</feature>
<keyword id="KW-0963">Cytoplasm</keyword>
<keyword id="KW-1185">Reference proteome</keyword>
<keyword id="KW-0694">RNA-binding</keyword>
<name>SSRP_CHRVO</name>
<organism>
    <name type="scientific">Chromobacterium violaceum (strain ATCC 12472 / DSM 30191 / JCM 1249 / CCUG 213 / NBRC 12614 / NCIMB 9131 / NCTC 9757 / MK)</name>
    <dbReference type="NCBI Taxonomy" id="243365"/>
    <lineage>
        <taxon>Bacteria</taxon>
        <taxon>Pseudomonadati</taxon>
        <taxon>Pseudomonadota</taxon>
        <taxon>Betaproteobacteria</taxon>
        <taxon>Neisseriales</taxon>
        <taxon>Chromobacteriaceae</taxon>
        <taxon>Chromobacterium</taxon>
    </lineage>
</organism>
<dbReference type="EMBL" id="AE016825">
    <property type="protein sequence ID" value="AAQ61125.1"/>
    <property type="molecule type" value="Genomic_DNA"/>
</dbReference>
<dbReference type="RefSeq" id="WP_011137011.1">
    <property type="nucleotide sequence ID" value="NC_005085.1"/>
</dbReference>
<dbReference type="SMR" id="Q7NSG2"/>
<dbReference type="STRING" id="243365.CV_3464"/>
<dbReference type="GeneID" id="66364682"/>
<dbReference type="KEGG" id="cvi:CV_3464"/>
<dbReference type="eggNOG" id="COG0691">
    <property type="taxonomic scope" value="Bacteria"/>
</dbReference>
<dbReference type="HOGENOM" id="CLU_108953_3_0_4"/>
<dbReference type="OrthoDB" id="9805462at2"/>
<dbReference type="Proteomes" id="UP000001424">
    <property type="component" value="Chromosome"/>
</dbReference>
<dbReference type="GO" id="GO:0005829">
    <property type="term" value="C:cytosol"/>
    <property type="evidence" value="ECO:0007669"/>
    <property type="project" value="TreeGrafter"/>
</dbReference>
<dbReference type="GO" id="GO:0003723">
    <property type="term" value="F:RNA binding"/>
    <property type="evidence" value="ECO:0007669"/>
    <property type="project" value="UniProtKB-UniRule"/>
</dbReference>
<dbReference type="GO" id="GO:0070929">
    <property type="term" value="P:trans-translation"/>
    <property type="evidence" value="ECO:0007669"/>
    <property type="project" value="UniProtKB-UniRule"/>
</dbReference>
<dbReference type="CDD" id="cd09294">
    <property type="entry name" value="SmpB"/>
    <property type="match status" value="1"/>
</dbReference>
<dbReference type="Gene3D" id="2.40.280.10">
    <property type="match status" value="1"/>
</dbReference>
<dbReference type="HAMAP" id="MF_00023">
    <property type="entry name" value="SmpB"/>
    <property type="match status" value="1"/>
</dbReference>
<dbReference type="InterPro" id="IPR023620">
    <property type="entry name" value="SmpB"/>
</dbReference>
<dbReference type="InterPro" id="IPR000037">
    <property type="entry name" value="SsrA-bd_prot"/>
</dbReference>
<dbReference type="InterPro" id="IPR020081">
    <property type="entry name" value="SsrA-bd_prot_CS"/>
</dbReference>
<dbReference type="NCBIfam" id="NF003843">
    <property type="entry name" value="PRK05422.1"/>
    <property type="match status" value="1"/>
</dbReference>
<dbReference type="NCBIfam" id="TIGR00086">
    <property type="entry name" value="smpB"/>
    <property type="match status" value="1"/>
</dbReference>
<dbReference type="PANTHER" id="PTHR30308:SF2">
    <property type="entry name" value="SSRA-BINDING PROTEIN"/>
    <property type="match status" value="1"/>
</dbReference>
<dbReference type="PANTHER" id="PTHR30308">
    <property type="entry name" value="TMRNA-BINDING COMPONENT OF TRANS-TRANSLATION TAGGING COMPLEX"/>
    <property type="match status" value="1"/>
</dbReference>
<dbReference type="Pfam" id="PF01668">
    <property type="entry name" value="SmpB"/>
    <property type="match status" value="1"/>
</dbReference>
<dbReference type="SUPFAM" id="SSF74982">
    <property type="entry name" value="Small protein B (SmpB)"/>
    <property type="match status" value="1"/>
</dbReference>
<dbReference type="PROSITE" id="PS01317">
    <property type="entry name" value="SSRP"/>
    <property type="match status" value="1"/>
</dbReference>
<evidence type="ECO:0000255" key="1">
    <source>
        <dbReference type="HAMAP-Rule" id="MF_00023"/>
    </source>
</evidence>
<evidence type="ECO:0000256" key="2">
    <source>
        <dbReference type="SAM" id="MobiDB-lite"/>
    </source>
</evidence>
<accession>Q7NSG2</accession>
<sequence length="151" mass="17460">MSIIQNRKAFHDYFIEEKLEAGLVLEGWEVKAIRAGRVQLKESYVDWKNGAFWLIGCHITPLQSASTHVKPDPVRPRKLLMSQAEINRFIGKVERAGYTMMALDLHYTKGNVKAEVGLAKGKKLHDKRDTEKDREWQREKQRVMKNQRGAA</sequence>
<protein>
    <recommendedName>
        <fullName evidence="1">SsrA-binding protein</fullName>
    </recommendedName>
    <alternativeName>
        <fullName evidence="1">Small protein B</fullName>
    </alternativeName>
</protein>
<comment type="function">
    <text evidence="1">Required for rescue of stalled ribosomes mediated by trans-translation. Binds to transfer-messenger RNA (tmRNA), required for stable association of tmRNA with ribosomes. tmRNA and SmpB together mimic tRNA shape, replacing the anticodon stem-loop with SmpB. tmRNA is encoded by the ssrA gene; the 2 termini fold to resemble tRNA(Ala) and it encodes a 'tag peptide', a short internal open reading frame. During trans-translation Ala-aminoacylated tmRNA acts like a tRNA, entering the A-site of stalled ribosomes, displacing the stalled mRNA. The ribosome then switches to translate the ORF on the tmRNA; the nascent peptide is terminated with the 'tag peptide' encoded by the tmRNA and targeted for degradation. The ribosome is freed to recommence translation, which seems to be the essential function of trans-translation.</text>
</comment>
<comment type="subcellular location">
    <subcellularLocation>
        <location evidence="1">Cytoplasm</location>
    </subcellularLocation>
    <text evidence="1">The tmRNA-SmpB complex associates with stalled 70S ribosomes.</text>
</comment>
<comment type="similarity">
    <text evidence="1">Belongs to the SmpB family.</text>
</comment>
<reference key="1">
    <citation type="journal article" date="2003" name="Proc. Natl. Acad. Sci. U.S.A.">
        <title>The complete genome sequence of Chromobacterium violaceum reveals remarkable and exploitable bacterial adaptability.</title>
        <authorList>
            <person name="Vasconcelos A.T.R."/>
            <person name="de Almeida D.F."/>
            <person name="Hungria M."/>
            <person name="Guimaraes C.T."/>
            <person name="Antonio R.V."/>
            <person name="Almeida F.C."/>
            <person name="de Almeida L.G.P."/>
            <person name="de Almeida R."/>
            <person name="Alves-Gomes J.A."/>
            <person name="Andrade E.M."/>
            <person name="Araripe J."/>
            <person name="de Araujo M.F.F."/>
            <person name="Astolfi-Filho S."/>
            <person name="Azevedo V."/>
            <person name="Baptista A.J."/>
            <person name="Bataus L.A.M."/>
            <person name="Batista J.S."/>
            <person name="Belo A."/>
            <person name="van den Berg C."/>
            <person name="Bogo M."/>
            <person name="Bonatto S."/>
            <person name="Bordignon J."/>
            <person name="Brigido M.M."/>
            <person name="Brito C.A."/>
            <person name="Brocchi M."/>
            <person name="Burity H.A."/>
            <person name="Camargo A.A."/>
            <person name="Cardoso D.D.P."/>
            <person name="Carneiro N.P."/>
            <person name="Carraro D.M."/>
            <person name="Carvalho C.M.B."/>
            <person name="Cascardo J.C.M."/>
            <person name="Cavada B.S."/>
            <person name="Chueire L.M.O."/>
            <person name="Creczynski-Pasa T.B."/>
            <person name="Cunha-Junior N.C."/>
            <person name="Fagundes N."/>
            <person name="Falcao C.L."/>
            <person name="Fantinatti F."/>
            <person name="Farias I.P."/>
            <person name="Felipe M.S.S."/>
            <person name="Ferrari L.P."/>
            <person name="Ferro J.A."/>
            <person name="Ferro M.I.T."/>
            <person name="Franco G.R."/>
            <person name="Freitas N.S.A."/>
            <person name="Furlan L.R."/>
            <person name="Gazzinelli R.T."/>
            <person name="Gomes E.A."/>
            <person name="Goncalves P.R."/>
            <person name="Grangeiro T.B."/>
            <person name="Grattapaglia D."/>
            <person name="Grisard E.C."/>
            <person name="Hanna E.S."/>
            <person name="Jardim S.N."/>
            <person name="Laurino J."/>
            <person name="Leoi L.C.T."/>
            <person name="Lima L.F.A."/>
            <person name="Loureiro M.F."/>
            <person name="Lyra M.C.C.P."/>
            <person name="Madeira H.M.F."/>
            <person name="Manfio G.P."/>
            <person name="Maranhao A.Q."/>
            <person name="Martins W.S."/>
            <person name="di Mauro S.M.Z."/>
            <person name="de Medeiros S.R.B."/>
            <person name="Meissner R.V."/>
            <person name="Moreira M.A.M."/>
            <person name="Nascimento F.F."/>
            <person name="Nicolas M.F."/>
            <person name="Oliveira J.G."/>
            <person name="Oliveira S.C."/>
            <person name="Paixao R.F.C."/>
            <person name="Parente J.A."/>
            <person name="Pedrosa F.O."/>
            <person name="Pena S.D.J."/>
            <person name="Pereira J.O."/>
            <person name="Pereira M."/>
            <person name="Pinto L.S.R.C."/>
            <person name="Pinto L.S."/>
            <person name="Porto J.I.R."/>
            <person name="Potrich D.P."/>
            <person name="Ramalho-Neto C.E."/>
            <person name="Reis A.M.M."/>
            <person name="Rigo L.U."/>
            <person name="Rondinelli E."/>
            <person name="Santos E.B.P."/>
            <person name="Santos F.R."/>
            <person name="Schneider M.P.C."/>
            <person name="Seuanez H.N."/>
            <person name="Silva A.M.R."/>
            <person name="da Silva A.L.C."/>
            <person name="Silva D.W."/>
            <person name="Silva R."/>
            <person name="Simoes I.C."/>
            <person name="Simon D."/>
            <person name="Soares C.M.A."/>
            <person name="Soares R.B.A."/>
            <person name="Souza E.M."/>
            <person name="Souza K.R.L."/>
            <person name="Souza R.C."/>
            <person name="Steffens M.B.R."/>
            <person name="Steindel M."/>
            <person name="Teixeira S.R."/>
            <person name="Urmenyi T."/>
            <person name="Vettore A."/>
            <person name="Wassem R."/>
            <person name="Zaha A."/>
            <person name="Simpson A.J.G."/>
        </authorList>
    </citation>
    <scope>NUCLEOTIDE SEQUENCE [LARGE SCALE GENOMIC DNA]</scope>
    <source>
        <strain>ATCC 12472 / DSM 30191 / JCM 1249 / CCUG 213 / NBRC 12614 / NCIMB 9131 / NCTC 9757 / MK</strain>
    </source>
</reference>